<protein>
    <recommendedName>
        <fullName evidence="1">Ribosomal RNA large subunit methyltransferase I</fullName>
        <ecNumber evidence="1">2.1.1.191</ecNumber>
    </recommendedName>
    <alternativeName>
        <fullName evidence="1">23S rRNA m5C1962 methyltransferase</fullName>
    </alternativeName>
    <alternativeName>
        <fullName evidence="1">rRNA (cytosine-C(5)-)-methyltransferase RlmI</fullName>
    </alternativeName>
</protein>
<keyword id="KW-0963">Cytoplasm</keyword>
<keyword id="KW-0489">Methyltransferase</keyword>
<keyword id="KW-0694">RNA-binding</keyword>
<keyword id="KW-0698">rRNA processing</keyword>
<keyword id="KW-0949">S-adenosyl-L-methionine</keyword>
<keyword id="KW-0808">Transferase</keyword>
<name>RLMI_SALDC</name>
<evidence type="ECO:0000255" key="1">
    <source>
        <dbReference type="HAMAP-Rule" id="MF_01857"/>
    </source>
</evidence>
<proteinExistence type="inferred from homology"/>
<organism>
    <name type="scientific">Salmonella dublin (strain CT_02021853)</name>
    <dbReference type="NCBI Taxonomy" id="439851"/>
    <lineage>
        <taxon>Bacteria</taxon>
        <taxon>Pseudomonadati</taxon>
        <taxon>Pseudomonadota</taxon>
        <taxon>Gammaproteobacteria</taxon>
        <taxon>Enterobacterales</taxon>
        <taxon>Enterobacteriaceae</taxon>
        <taxon>Salmonella</taxon>
    </lineage>
</organism>
<accession>B5FR09</accession>
<feature type="chain" id="PRO_0000366242" description="Ribosomal RNA large subunit methyltransferase I">
    <location>
        <begin position="1"/>
        <end position="403"/>
    </location>
</feature>
<feature type="domain" description="PUA" evidence="1">
    <location>
        <begin position="9"/>
        <end position="88"/>
    </location>
</feature>
<dbReference type="EC" id="2.1.1.191" evidence="1"/>
<dbReference type="EMBL" id="CP001144">
    <property type="protein sequence ID" value="ACH73876.1"/>
    <property type="molecule type" value="Genomic_DNA"/>
</dbReference>
<dbReference type="RefSeq" id="WP_000140480.1">
    <property type="nucleotide sequence ID" value="NC_011205.1"/>
</dbReference>
<dbReference type="SMR" id="B5FR09"/>
<dbReference type="KEGG" id="sed:SeD_A1155"/>
<dbReference type="HOGENOM" id="CLU_014042_0_0_6"/>
<dbReference type="Proteomes" id="UP000008322">
    <property type="component" value="Chromosome"/>
</dbReference>
<dbReference type="GO" id="GO:0005737">
    <property type="term" value="C:cytoplasm"/>
    <property type="evidence" value="ECO:0007669"/>
    <property type="project" value="UniProtKB-SubCell"/>
</dbReference>
<dbReference type="GO" id="GO:0003723">
    <property type="term" value="F:RNA binding"/>
    <property type="evidence" value="ECO:0007669"/>
    <property type="project" value="UniProtKB-KW"/>
</dbReference>
<dbReference type="GO" id="GO:0016434">
    <property type="term" value="F:rRNA (cytosine) methyltransferase activity"/>
    <property type="evidence" value="ECO:0007669"/>
    <property type="project" value="UniProtKB-UniRule"/>
</dbReference>
<dbReference type="CDD" id="cd02440">
    <property type="entry name" value="AdoMet_MTases"/>
    <property type="match status" value="1"/>
</dbReference>
<dbReference type="CDD" id="cd21153">
    <property type="entry name" value="PUA_RlmI"/>
    <property type="match status" value="1"/>
</dbReference>
<dbReference type="CDD" id="cd11572">
    <property type="entry name" value="RlmI_M_like"/>
    <property type="match status" value="1"/>
</dbReference>
<dbReference type="FunFam" id="3.40.50.150:FF:000044">
    <property type="entry name" value="Ribosomal RNA large subunit methyltransferase I"/>
    <property type="match status" value="1"/>
</dbReference>
<dbReference type="Gene3D" id="2.30.130.10">
    <property type="entry name" value="PUA domain"/>
    <property type="match status" value="1"/>
</dbReference>
<dbReference type="Gene3D" id="3.30.750.80">
    <property type="entry name" value="RNA methyltransferase domain (HRMD) like"/>
    <property type="match status" value="1"/>
</dbReference>
<dbReference type="Gene3D" id="3.40.50.150">
    <property type="entry name" value="Vaccinia Virus protein VP39"/>
    <property type="match status" value="1"/>
</dbReference>
<dbReference type="HAMAP" id="MF_01857">
    <property type="entry name" value="23SrRNA_methyltr_I"/>
    <property type="match status" value="1"/>
</dbReference>
<dbReference type="InterPro" id="IPR002478">
    <property type="entry name" value="PUA"/>
</dbReference>
<dbReference type="InterPro" id="IPR015947">
    <property type="entry name" value="PUA-like_sf"/>
</dbReference>
<dbReference type="InterPro" id="IPR036974">
    <property type="entry name" value="PUA_sf"/>
</dbReference>
<dbReference type="InterPro" id="IPR023542">
    <property type="entry name" value="RLMI"/>
</dbReference>
<dbReference type="InterPro" id="IPR041532">
    <property type="entry name" value="RlmI-like_PUA"/>
</dbReference>
<dbReference type="InterPro" id="IPR019614">
    <property type="entry name" value="SAM-dep_methyl-trfase"/>
</dbReference>
<dbReference type="InterPro" id="IPR029063">
    <property type="entry name" value="SAM-dependent_MTases_sf"/>
</dbReference>
<dbReference type="NCBIfam" id="NF011707">
    <property type="entry name" value="PRK15128.1"/>
    <property type="match status" value="1"/>
</dbReference>
<dbReference type="PANTHER" id="PTHR42873">
    <property type="entry name" value="RIBOSOMAL RNA LARGE SUBUNIT METHYLTRANSFERASE"/>
    <property type="match status" value="1"/>
</dbReference>
<dbReference type="PANTHER" id="PTHR42873:SF1">
    <property type="entry name" value="S-ADENOSYLMETHIONINE-DEPENDENT METHYLTRANSFERASE DOMAIN-CONTAINING PROTEIN"/>
    <property type="match status" value="1"/>
</dbReference>
<dbReference type="Pfam" id="PF10672">
    <property type="entry name" value="Methyltrans_SAM"/>
    <property type="match status" value="1"/>
</dbReference>
<dbReference type="Pfam" id="PF17785">
    <property type="entry name" value="PUA_3"/>
    <property type="match status" value="1"/>
</dbReference>
<dbReference type="SMART" id="SM00359">
    <property type="entry name" value="PUA"/>
    <property type="match status" value="1"/>
</dbReference>
<dbReference type="SUPFAM" id="SSF88697">
    <property type="entry name" value="PUA domain-like"/>
    <property type="match status" value="1"/>
</dbReference>
<dbReference type="SUPFAM" id="SSF53335">
    <property type="entry name" value="S-adenosyl-L-methionine-dependent methyltransferases"/>
    <property type="match status" value="1"/>
</dbReference>
<dbReference type="PROSITE" id="PS50890">
    <property type="entry name" value="PUA"/>
    <property type="match status" value="1"/>
</dbReference>
<sequence length="403" mass="45176">MTESTFPQYPRLVLSKGREKSLLRRHPWVFSGAVSRLEGKANLGETIDIVDHQGKWLARGAWSPASQIRARVWTFDKAESIDIAFFTRRLRQAQQWRDWLAKKDGLDSYRLIAGESDGLPGVTIDRFGHFLVLQLLSAGAEYQRAALISALQTCYPDCAIYDRSDVAVRKKEGMALTQGPVTGELPPALLPIEEHGMKLLVDIQGGHKTGYYLDQRDSRLATRRYVENQRVLNCFSYTGGFAVSALMGGCRQVVSVDTSQDALDIARQNVELNQLDLSKAEFVRDDVFKLLRAYREHGEKFDVIIMDPPKFVENKSQLMGACRGYKDINMLAIQLLNPGGILLTFSCSGLMTSDLFQKIIADAAIDAGRDVQFIEQFRQAADHPVIATYPEGLYLKGFACRVM</sequence>
<gene>
    <name evidence="1" type="primary">rlmI</name>
    <name type="ordered locus">SeD_A1155</name>
</gene>
<comment type="function">
    <text evidence="1">Specifically methylates the cytosine at position 1962 (m5C1962) of 23S rRNA.</text>
</comment>
<comment type="catalytic activity">
    <reaction evidence="1">
        <text>cytidine(1962) in 23S rRNA + S-adenosyl-L-methionine = 5-methylcytidine(1962) in 23S rRNA + S-adenosyl-L-homocysteine + H(+)</text>
        <dbReference type="Rhea" id="RHEA:42912"/>
        <dbReference type="Rhea" id="RHEA-COMP:10382"/>
        <dbReference type="Rhea" id="RHEA-COMP:10386"/>
        <dbReference type="ChEBI" id="CHEBI:15378"/>
        <dbReference type="ChEBI" id="CHEBI:57856"/>
        <dbReference type="ChEBI" id="CHEBI:59789"/>
        <dbReference type="ChEBI" id="CHEBI:74483"/>
        <dbReference type="ChEBI" id="CHEBI:82748"/>
        <dbReference type="EC" id="2.1.1.191"/>
    </reaction>
</comment>
<comment type="subcellular location">
    <subcellularLocation>
        <location evidence="1">Cytoplasm</location>
    </subcellularLocation>
</comment>
<comment type="similarity">
    <text evidence="1">Belongs to the methyltransferase superfamily. RlmI family.</text>
</comment>
<reference key="1">
    <citation type="journal article" date="2011" name="J. Bacteriol.">
        <title>Comparative genomics of 28 Salmonella enterica isolates: evidence for CRISPR-mediated adaptive sublineage evolution.</title>
        <authorList>
            <person name="Fricke W.F."/>
            <person name="Mammel M.K."/>
            <person name="McDermott P.F."/>
            <person name="Tartera C."/>
            <person name="White D.G."/>
            <person name="Leclerc J.E."/>
            <person name="Ravel J."/>
            <person name="Cebula T.A."/>
        </authorList>
    </citation>
    <scope>NUCLEOTIDE SEQUENCE [LARGE SCALE GENOMIC DNA]</scope>
    <source>
        <strain>CT_02021853</strain>
    </source>
</reference>